<proteinExistence type="inferred from homology"/>
<organism>
    <name type="scientific">Escherichia coli O9:H4 (strain HS)</name>
    <dbReference type="NCBI Taxonomy" id="331112"/>
    <lineage>
        <taxon>Bacteria</taxon>
        <taxon>Pseudomonadati</taxon>
        <taxon>Pseudomonadota</taxon>
        <taxon>Gammaproteobacteria</taxon>
        <taxon>Enterobacterales</taxon>
        <taxon>Enterobacteriaceae</taxon>
        <taxon>Escherichia</taxon>
    </lineage>
</organism>
<protein>
    <recommendedName>
        <fullName evidence="1">Esterase FrsA</fullName>
        <ecNumber evidence="1">3.1.1.1</ecNumber>
    </recommendedName>
</protein>
<comment type="function">
    <text evidence="1">Catalyzes the hydrolysis of esters.</text>
</comment>
<comment type="catalytic activity">
    <reaction evidence="1">
        <text>a carboxylic ester + H2O = an alcohol + a carboxylate + H(+)</text>
        <dbReference type="Rhea" id="RHEA:21164"/>
        <dbReference type="ChEBI" id="CHEBI:15377"/>
        <dbReference type="ChEBI" id="CHEBI:15378"/>
        <dbReference type="ChEBI" id="CHEBI:29067"/>
        <dbReference type="ChEBI" id="CHEBI:30879"/>
        <dbReference type="ChEBI" id="CHEBI:33308"/>
        <dbReference type="EC" id="3.1.1.1"/>
    </reaction>
</comment>
<comment type="similarity">
    <text evidence="1">Belongs to the FrsA family.</text>
</comment>
<gene>
    <name evidence="1" type="primary">frsA</name>
    <name type="ordered locus">EcHS_A0266</name>
</gene>
<name>FRSA_ECOHS</name>
<keyword id="KW-0378">Hydrolase</keyword>
<keyword id="KW-0719">Serine esterase</keyword>
<reference key="1">
    <citation type="journal article" date="2008" name="J. Bacteriol.">
        <title>The pangenome structure of Escherichia coli: comparative genomic analysis of E. coli commensal and pathogenic isolates.</title>
        <authorList>
            <person name="Rasko D.A."/>
            <person name="Rosovitz M.J."/>
            <person name="Myers G.S.A."/>
            <person name="Mongodin E.F."/>
            <person name="Fricke W.F."/>
            <person name="Gajer P."/>
            <person name="Crabtree J."/>
            <person name="Sebaihia M."/>
            <person name="Thomson N.R."/>
            <person name="Chaudhuri R."/>
            <person name="Henderson I.R."/>
            <person name="Sperandio V."/>
            <person name="Ravel J."/>
        </authorList>
    </citation>
    <scope>NUCLEOTIDE SEQUENCE [LARGE SCALE GENOMIC DNA]</scope>
    <source>
        <strain>HS</strain>
    </source>
</reference>
<dbReference type="EC" id="3.1.1.1" evidence="1"/>
<dbReference type="EMBL" id="CP000802">
    <property type="protein sequence ID" value="ABV04656.1"/>
    <property type="molecule type" value="Genomic_DNA"/>
</dbReference>
<dbReference type="RefSeq" id="WP_000189543.1">
    <property type="nucleotide sequence ID" value="NC_009800.1"/>
</dbReference>
<dbReference type="SMR" id="A7ZWK2"/>
<dbReference type="ESTHER" id="ecoli-yafa">
    <property type="family name" value="Duf_1100-R"/>
</dbReference>
<dbReference type="KEGG" id="ecx:EcHS_A0266"/>
<dbReference type="HOGENOM" id="CLU_036819_0_0_6"/>
<dbReference type="GO" id="GO:0106435">
    <property type="term" value="F:carboxylesterase activity"/>
    <property type="evidence" value="ECO:0007669"/>
    <property type="project" value="UniProtKB-EC"/>
</dbReference>
<dbReference type="FunFam" id="3.40.50.1820:FF:000022">
    <property type="entry name" value="Esterase FrsA"/>
    <property type="match status" value="1"/>
</dbReference>
<dbReference type="Gene3D" id="3.40.50.1820">
    <property type="entry name" value="alpha/beta hydrolase"/>
    <property type="match status" value="1"/>
</dbReference>
<dbReference type="HAMAP" id="MF_01063">
    <property type="entry name" value="FrsA"/>
    <property type="match status" value="1"/>
</dbReference>
<dbReference type="InterPro" id="IPR029058">
    <property type="entry name" value="AB_hydrolase_fold"/>
</dbReference>
<dbReference type="InterPro" id="IPR043423">
    <property type="entry name" value="FrsA"/>
</dbReference>
<dbReference type="InterPro" id="IPR010520">
    <property type="entry name" value="FrsA-like"/>
</dbReference>
<dbReference type="InterPro" id="IPR050261">
    <property type="entry name" value="FrsA_esterase"/>
</dbReference>
<dbReference type="NCBIfam" id="NF003460">
    <property type="entry name" value="PRK05077.1"/>
    <property type="match status" value="1"/>
</dbReference>
<dbReference type="PANTHER" id="PTHR22946">
    <property type="entry name" value="DIENELACTONE HYDROLASE DOMAIN-CONTAINING PROTEIN-RELATED"/>
    <property type="match status" value="1"/>
</dbReference>
<dbReference type="PANTHER" id="PTHR22946:SF4">
    <property type="entry name" value="ESTERASE FRSA"/>
    <property type="match status" value="1"/>
</dbReference>
<dbReference type="Pfam" id="PF06500">
    <property type="entry name" value="FrsA-like"/>
    <property type="match status" value="1"/>
</dbReference>
<dbReference type="SUPFAM" id="SSF53474">
    <property type="entry name" value="alpha/beta-Hydrolases"/>
    <property type="match status" value="1"/>
</dbReference>
<accession>A7ZWK2</accession>
<evidence type="ECO:0000255" key="1">
    <source>
        <dbReference type="HAMAP-Rule" id="MF_01063"/>
    </source>
</evidence>
<feature type="chain" id="PRO_1000064478" description="Esterase FrsA">
    <location>
        <begin position="1"/>
        <end position="414"/>
    </location>
</feature>
<sequence length="414" mass="46965">MTQANLSETLFKPRFKHPETSTLVRRFNHGAQPPVQSALDGKTIPHWYRMINRLMWIWRGIDPREILDVQARIVMSDAERTDDDLYDTVIGYRGGNWIYEWATQAMVWQQKACAEEDPQLSGRHWLHAATLYNIAAYPHLKGDDLAEQAQALSNRAYEEAAQRLPGTMRQMEFTVPGGAPITGFLHMPKGDGPFPTVLMCGGLDAMQTDYYSLYERYFAPRGIAMLTIDMPSVGFSSKWKLTQDSSLLHQHVLKALPNVPWVDHTRVAAFGFRFGANVAVRLAYLESPRLKAVACLGPVVHTLLSDFKCQQQVPEMYLDVLASRLGMHDASDEALRVELNRYSLKVQGLLGRRCPTPMLSGYWKNDPFSPEEDSRLITSSSADGKLLEIPFNPVYRNFDKGLQEITGWIEKRLC</sequence>